<feature type="chain" id="PRO_1000122625" description="Putative membrane protein insertion efficiency factor">
    <location>
        <begin position="1"/>
        <end position="86"/>
    </location>
</feature>
<gene>
    <name type="ordered locus">CJA_3824</name>
</gene>
<dbReference type="EMBL" id="CP000934">
    <property type="protein sequence ID" value="ACE83127.1"/>
    <property type="molecule type" value="Genomic_DNA"/>
</dbReference>
<dbReference type="STRING" id="498211.CJA_3824"/>
<dbReference type="KEGG" id="cja:CJA_3824"/>
<dbReference type="eggNOG" id="COG0759">
    <property type="taxonomic scope" value="Bacteria"/>
</dbReference>
<dbReference type="HOGENOM" id="CLU_144811_5_2_6"/>
<dbReference type="OrthoDB" id="9801753at2"/>
<dbReference type="Proteomes" id="UP000001036">
    <property type="component" value="Chromosome"/>
</dbReference>
<dbReference type="GO" id="GO:0005886">
    <property type="term" value="C:plasma membrane"/>
    <property type="evidence" value="ECO:0007669"/>
    <property type="project" value="UniProtKB-SubCell"/>
</dbReference>
<dbReference type="HAMAP" id="MF_00386">
    <property type="entry name" value="UPF0161_YidD"/>
    <property type="match status" value="1"/>
</dbReference>
<dbReference type="InterPro" id="IPR002696">
    <property type="entry name" value="Membr_insert_effic_factor_YidD"/>
</dbReference>
<dbReference type="NCBIfam" id="TIGR00278">
    <property type="entry name" value="membrane protein insertion efficiency factor YidD"/>
    <property type="match status" value="1"/>
</dbReference>
<dbReference type="PANTHER" id="PTHR33383">
    <property type="entry name" value="MEMBRANE PROTEIN INSERTION EFFICIENCY FACTOR-RELATED"/>
    <property type="match status" value="1"/>
</dbReference>
<dbReference type="PANTHER" id="PTHR33383:SF1">
    <property type="entry name" value="MEMBRANE PROTEIN INSERTION EFFICIENCY FACTOR-RELATED"/>
    <property type="match status" value="1"/>
</dbReference>
<dbReference type="Pfam" id="PF01809">
    <property type="entry name" value="YidD"/>
    <property type="match status" value="1"/>
</dbReference>
<dbReference type="SMART" id="SM01234">
    <property type="entry name" value="Haemolytic"/>
    <property type="match status" value="1"/>
</dbReference>
<sequence>MVWAGVKLLHGYRYLLSPWIGNQCRFYPSCSHYAEEALKTHGFLAGIYLTARRLIKCHPWHPGGIDPVPEHEATCCSHTHPTHGKH</sequence>
<protein>
    <recommendedName>
        <fullName evidence="1">Putative membrane protein insertion efficiency factor</fullName>
    </recommendedName>
</protein>
<keyword id="KW-0997">Cell inner membrane</keyword>
<keyword id="KW-1003">Cell membrane</keyword>
<keyword id="KW-0472">Membrane</keyword>
<keyword id="KW-1185">Reference proteome</keyword>
<accession>B3PIU2</accession>
<name>YIDD_CELJU</name>
<comment type="function">
    <text evidence="1">Could be involved in insertion of integral membrane proteins into the membrane.</text>
</comment>
<comment type="subcellular location">
    <subcellularLocation>
        <location evidence="1">Cell inner membrane</location>
        <topology evidence="1">Peripheral membrane protein</topology>
        <orientation evidence="1">Cytoplasmic side</orientation>
    </subcellularLocation>
</comment>
<comment type="similarity">
    <text evidence="1">Belongs to the UPF0161 family.</text>
</comment>
<reference key="1">
    <citation type="journal article" date="2008" name="J. Bacteriol.">
        <title>Insights into plant cell wall degradation from the genome sequence of the soil bacterium Cellvibrio japonicus.</title>
        <authorList>
            <person name="DeBoy R.T."/>
            <person name="Mongodin E.F."/>
            <person name="Fouts D.E."/>
            <person name="Tailford L.E."/>
            <person name="Khouri H."/>
            <person name="Emerson J.B."/>
            <person name="Mohamoud Y."/>
            <person name="Watkins K."/>
            <person name="Henrissat B."/>
            <person name="Gilbert H.J."/>
            <person name="Nelson K.E."/>
        </authorList>
    </citation>
    <scope>NUCLEOTIDE SEQUENCE [LARGE SCALE GENOMIC DNA]</scope>
    <source>
        <strain>Ueda107</strain>
    </source>
</reference>
<organism>
    <name type="scientific">Cellvibrio japonicus (strain Ueda107)</name>
    <name type="common">Pseudomonas fluorescens subsp. cellulosa</name>
    <dbReference type="NCBI Taxonomy" id="498211"/>
    <lineage>
        <taxon>Bacteria</taxon>
        <taxon>Pseudomonadati</taxon>
        <taxon>Pseudomonadota</taxon>
        <taxon>Gammaproteobacteria</taxon>
        <taxon>Cellvibrionales</taxon>
        <taxon>Cellvibrionaceae</taxon>
        <taxon>Cellvibrio</taxon>
    </lineage>
</organism>
<proteinExistence type="inferred from homology"/>
<evidence type="ECO:0000255" key="1">
    <source>
        <dbReference type="HAMAP-Rule" id="MF_00386"/>
    </source>
</evidence>